<evidence type="ECO:0000250" key="1">
    <source>
        <dbReference type="UniProtKB" id="P08050"/>
    </source>
</evidence>
<evidence type="ECO:0000250" key="2">
    <source>
        <dbReference type="UniProtKB" id="P17302"/>
    </source>
</evidence>
<evidence type="ECO:0000250" key="3">
    <source>
        <dbReference type="UniProtKB" id="P23242"/>
    </source>
</evidence>
<evidence type="ECO:0000255" key="4"/>
<evidence type="ECO:0000256" key="5">
    <source>
        <dbReference type="SAM" id="MobiDB-lite"/>
    </source>
</evidence>
<evidence type="ECO:0000269" key="6">
    <source>
    </source>
</evidence>
<evidence type="ECO:0000305" key="7"/>
<name>CXA1_RABIT</name>
<organism>
    <name type="scientific">Oryctolagus cuniculus</name>
    <name type="common">Rabbit</name>
    <dbReference type="NCBI Taxonomy" id="9986"/>
    <lineage>
        <taxon>Eukaryota</taxon>
        <taxon>Metazoa</taxon>
        <taxon>Chordata</taxon>
        <taxon>Craniata</taxon>
        <taxon>Vertebrata</taxon>
        <taxon>Euteleostomi</taxon>
        <taxon>Mammalia</taxon>
        <taxon>Eutheria</taxon>
        <taxon>Euarchontoglires</taxon>
        <taxon>Glires</taxon>
        <taxon>Lagomorpha</taxon>
        <taxon>Leporidae</taxon>
        <taxon>Oryctolagus</taxon>
    </lineage>
</organism>
<proteinExistence type="evidence at protein level"/>
<keyword id="KW-0007">Acetylation</keyword>
<keyword id="KW-0965">Cell junction</keyword>
<keyword id="KW-1003">Cell membrane</keyword>
<keyword id="KW-1015">Disulfide bond</keyword>
<keyword id="KW-0256">Endoplasmic reticulum</keyword>
<keyword id="KW-0303">Gap junction</keyword>
<keyword id="KW-1017">Isopeptide bond</keyword>
<keyword id="KW-0472">Membrane</keyword>
<keyword id="KW-0597">Phosphoprotein</keyword>
<keyword id="KW-1185">Reference proteome</keyword>
<keyword id="KW-0702">S-nitrosylation</keyword>
<keyword id="KW-0812">Transmembrane</keyword>
<keyword id="KW-1133">Transmembrane helix</keyword>
<keyword id="KW-0832">Ubl conjugation</keyword>
<feature type="initiator methionine" description="Removed" evidence="1">
    <location>
        <position position="1"/>
    </location>
</feature>
<feature type="chain" id="PRO_0000313001" description="Gap junction alpha-1 protein">
    <location>
        <begin position="2"/>
        <end position="382"/>
    </location>
</feature>
<feature type="topological domain" description="Cytoplasmic" evidence="1">
    <location>
        <begin position="2"/>
        <end position="23"/>
    </location>
</feature>
<feature type="transmembrane region" description="Helical" evidence="4">
    <location>
        <begin position="24"/>
        <end position="44"/>
    </location>
</feature>
<feature type="topological domain" description="Extracellular" evidence="1">
    <location>
        <begin position="45"/>
        <end position="76"/>
    </location>
</feature>
<feature type="transmembrane region" description="Helical" evidence="4">
    <location>
        <begin position="77"/>
        <end position="97"/>
    </location>
</feature>
<feature type="topological domain" description="Cytoplasmic" evidence="1">
    <location>
        <begin position="98"/>
        <end position="155"/>
    </location>
</feature>
<feature type="transmembrane region" description="Helical" evidence="4">
    <location>
        <begin position="156"/>
        <end position="176"/>
    </location>
</feature>
<feature type="topological domain" description="Extracellular" evidence="1">
    <location>
        <begin position="177"/>
        <end position="207"/>
    </location>
</feature>
<feature type="transmembrane region" description="Helical" evidence="4">
    <location>
        <begin position="208"/>
        <end position="228"/>
    </location>
</feature>
<feature type="topological domain" description="Cytoplasmic" evidence="1">
    <location>
        <begin position="229"/>
        <end position="382"/>
    </location>
</feature>
<feature type="region of interest" description="Interaction with NOV" evidence="1">
    <location>
        <begin position="244"/>
        <end position="382"/>
    </location>
</feature>
<feature type="region of interest" description="Interaction with UBQLN4" evidence="3">
    <location>
        <begin position="264"/>
        <end position="382"/>
    </location>
</feature>
<feature type="region of interest" description="Disordered" evidence="5">
    <location>
        <begin position="317"/>
        <end position="382"/>
    </location>
</feature>
<feature type="compositionally biased region" description="Polar residues" evidence="5">
    <location>
        <begin position="317"/>
        <end position="332"/>
    </location>
</feature>
<feature type="compositionally biased region" description="Low complexity" evidence="5">
    <location>
        <begin position="362"/>
        <end position="374"/>
    </location>
</feature>
<feature type="modified residue" description="Phosphoserine" evidence="1">
    <location>
        <position position="5"/>
    </location>
</feature>
<feature type="modified residue" description="Phosphotyrosine" evidence="3">
    <location>
        <position position="247"/>
    </location>
</feature>
<feature type="modified residue" description="Phosphoserine" evidence="2">
    <location>
        <position position="255"/>
    </location>
</feature>
<feature type="modified residue" description="Phosphoserine" evidence="1">
    <location>
        <position position="257"/>
    </location>
</feature>
<feature type="modified residue" description="Phosphoserine" evidence="2">
    <location>
        <position position="262"/>
    </location>
</feature>
<feature type="modified residue" description="S-nitrosocysteine" evidence="3">
    <location>
        <position position="271"/>
    </location>
</feature>
<feature type="modified residue" description="Phosphothreonine" evidence="3">
    <location>
        <position position="275"/>
    </location>
</feature>
<feature type="modified residue" description="Phosphoserine" evidence="3">
    <location>
        <position position="306"/>
    </location>
</feature>
<feature type="modified residue" description="Phosphoserine" evidence="2">
    <location>
        <position position="314"/>
    </location>
</feature>
<feature type="modified residue" description="Phosphoserine; by CK1" evidence="2">
    <location>
        <position position="325"/>
    </location>
</feature>
<feature type="modified residue" description="Phosphothreonine" evidence="3">
    <location>
        <position position="326"/>
    </location>
</feature>
<feature type="modified residue" description="Phosphoserine; by CK1" evidence="2">
    <location>
        <position position="328"/>
    </location>
</feature>
<feature type="modified residue" description="Phosphoserine; by CK1" evidence="2">
    <location>
        <position position="330"/>
    </location>
</feature>
<feature type="modified residue" description="Phosphoserine" evidence="2">
    <location>
        <position position="344"/>
    </location>
</feature>
<feature type="modified residue" description="Phosphoserine" evidence="3">
    <location>
        <position position="365"/>
    </location>
</feature>
<feature type="modified residue" description="Phosphoserine; by PKC/PRKCG and PKC/PRKCD" evidence="6">
    <location>
        <position position="368"/>
    </location>
</feature>
<feature type="modified residue" description="Phosphoserine" evidence="3">
    <location>
        <position position="369"/>
    </location>
</feature>
<feature type="modified residue" description="Phosphoserine" evidence="1">
    <location>
        <position position="373"/>
    </location>
</feature>
<feature type="disulfide bond" evidence="2">
    <location>
        <begin position="54"/>
        <end position="192"/>
    </location>
</feature>
<feature type="disulfide bond" evidence="2">
    <location>
        <begin position="187"/>
        <end position="198"/>
    </location>
</feature>
<feature type="cross-link" description="Glycyl lysine isopeptide (Lys-Gly) (interchain with G-Cter in SUMO)" evidence="2">
    <location>
        <position position="144"/>
    </location>
</feature>
<feature type="cross-link" description="Glycyl lysine isopeptide (Lys-Gly) (interchain with G-Cter in SUMO)" evidence="2">
    <location>
        <position position="237"/>
    </location>
</feature>
<feature type="mutagenesis site" description="Loss of phosphorylation." evidence="6">
    <original>S</original>
    <variation>A</variation>
    <location>
        <position position="368"/>
    </location>
</feature>
<protein>
    <recommendedName>
        <fullName>Gap junction alpha-1 protein</fullName>
    </recommendedName>
    <alternativeName>
        <fullName>Connexin-43</fullName>
        <shortName>Cx43</shortName>
    </alternativeName>
</protein>
<comment type="function">
    <text evidence="1 3">Gap junction protein that acts as a regulator of bladder capacity. A gap junction consists of a cluster of closely packed pairs of transmembrane channels, the connexons, through which materials of low MW diffuse from one cell to a neighboring cell. May play a critical role in the physiology of hearing by participating in the recycling of potassium to the cochlear endolymph. Negative regulator of bladder functional capacity: acts by enhancing intercellular electrical and chemical transmission, thus sensitizing bladder muscles to cholinergic neural stimuli and causing them to contract. May play a role in cell growth inhibition through the regulation of NOV expression and localization. Plays an essential role in gap junction communication in the ventricles (By similarity).</text>
</comment>
<comment type="subunit">
    <text evidence="1 2 3">A connexon is composed of a hexamer of connexins. Interacts with SGSM3 (By similarity). Interacts with RIC1/CIP150 (By similarity). Interacts with CNST and CSNK1D (By similarity). Interacts (via C-terminus) with TJP1. Interacts (via C-terminus) with SRC (via SH3 domain). Interacts (not ubiquitinated) with UBQLN4 (via UBA domain) (By similarity). Interacts with NOV. Interacts with TMEM65 (By similarity). Interacts with ANK3/ANKG and PKP2 (By similarity).</text>
</comment>
<comment type="subcellular location">
    <subcellularLocation>
        <location evidence="2">Cell membrane</location>
        <topology evidence="4">Multi-pass membrane protein</topology>
    </subcellularLocation>
    <subcellularLocation>
        <location evidence="2">Cell junction</location>
        <location evidence="2">Gap junction</location>
    </subcellularLocation>
    <subcellularLocation>
        <location evidence="3">Endoplasmic reticulum</location>
    </subcellularLocation>
    <text evidence="3">Localizes at the intercalated disk (ICD) in cardiomyocytes and proper localization at ICD is dependent on TMEM65.</text>
</comment>
<comment type="PTM">
    <text evidence="1 2 6">Phosphorylation at Ser-325, Ser-328 and Ser-330 by CK1 modulates gap junction assembly (By similarity). Phosphorylated at Ser-368 by PRKCG; phosphorylation induces disassembly of gap junction plaques and inhibition of gap junction activity. Phosphorylation at Ser-368 by PRKCD triggers its internalization into small vesicles leading to proteasome-mediated degradation (By similarity).</text>
</comment>
<comment type="PTM">
    <text evidence="2">Sumoylated with SUMO1, SUMO2 and SUMO3, which may regulate the level of functional Cx43 gap junctions at the plasma membrane. May be desumoylated by SENP1 or SENP2 (By similarity).</text>
</comment>
<comment type="PTM">
    <text evidence="3">S-nitrosylation at Cys-271 is enriched at the muscle endothelial gap junction in arteries, it augments channel permeability and may regulate of smooth muscle cell to endothelial cell communication.</text>
</comment>
<comment type="PTM">
    <text evidence="3">Acetylated in the developing cortex; leading to delocalization from the cell membrane.</text>
</comment>
<comment type="similarity">
    <text evidence="7">Belongs to the connexin family. Alpha-type (group II) subfamily.</text>
</comment>
<dbReference type="EMBL" id="AY382590">
    <property type="protein sequence ID" value="AAR33084.1"/>
    <property type="molecule type" value="Genomic_DNA"/>
</dbReference>
<dbReference type="RefSeq" id="NP_001185877.1">
    <property type="nucleotide sequence ID" value="NM_001198948.1"/>
</dbReference>
<dbReference type="RefSeq" id="XP_008261519.1">
    <property type="nucleotide sequence ID" value="XM_008263297.4"/>
</dbReference>
<dbReference type="BMRB" id="Q6TYA7"/>
<dbReference type="SMR" id="Q6TYA7"/>
<dbReference type="BioGRID" id="1171958">
    <property type="interactions" value="1"/>
</dbReference>
<dbReference type="FunCoup" id="Q6TYA7">
    <property type="interactions" value="96"/>
</dbReference>
<dbReference type="STRING" id="9986.ENSOCUP00000019547"/>
<dbReference type="iPTMnet" id="Q6TYA7"/>
<dbReference type="PaxDb" id="9986-ENSOCUP00000019547"/>
<dbReference type="GeneID" id="100008935"/>
<dbReference type="KEGG" id="ocu:100008935"/>
<dbReference type="CTD" id="2697"/>
<dbReference type="eggNOG" id="ENOG502QRAE">
    <property type="taxonomic scope" value="Eukaryota"/>
</dbReference>
<dbReference type="HOGENOM" id="CLU_037388_0_0_1"/>
<dbReference type="InParanoid" id="Q6TYA7"/>
<dbReference type="OMA" id="FWVLQFI"/>
<dbReference type="OrthoDB" id="8773830at2759"/>
<dbReference type="TreeFam" id="TF329606"/>
<dbReference type="Proteomes" id="UP000001811">
    <property type="component" value="Unplaced"/>
</dbReference>
<dbReference type="GO" id="GO:0016324">
    <property type="term" value="C:apical plasma membrane"/>
    <property type="evidence" value="ECO:0000250"/>
    <property type="project" value="UniProtKB"/>
</dbReference>
<dbReference type="GO" id="GO:0030054">
    <property type="term" value="C:cell junction"/>
    <property type="evidence" value="ECO:0000250"/>
    <property type="project" value="UniProtKB"/>
</dbReference>
<dbReference type="GO" id="GO:0005922">
    <property type="term" value="C:connexin complex"/>
    <property type="evidence" value="ECO:0000250"/>
    <property type="project" value="UniProtKB"/>
</dbReference>
<dbReference type="GO" id="GO:0005783">
    <property type="term" value="C:endoplasmic reticulum"/>
    <property type="evidence" value="ECO:0007669"/>
    <property type="project" value="UniProtKB-SubCell"/>
</dbReference>
<dbReference type="GO" id="GO:0014704">
    <property type="term" value="C:intercalated disc"/>
    <property type="evidence" value="ECO:0000250"/>
    <property type="project" value="UniProtKB"/>
</dbReference>
<dbReference type="GO" id="GO:0005739">
    <property type="term" value="C:mitochondrion"/>
    <property type="evidence" value="ECO:0000250"/>
    <property type="project" value="UniProtKB"/>
</dbReference>
<dbReference type="GO" id="GO:0005886">
    <property type="term" value="C:plasma membrane"/>
    <property type="evidence" value="ECO:0000250"/>
    <property type="project" value="UniProtKB"/>
</dbReference>
<dbReference type="GO" id="GO:0055077">
    <property type="term" value="F:gap junction hemi-channel activity"/>
    <property type="evidence" value="ECO:0000250"/>
    <property type="project" value="UniProtKB"/>
</dbReference>
<dbReference type="GO" id="GO:0015631">
    <property type="term" value="F:tubulin binding"/>
    <property type="evidence" value="ECO:0000250"/>
    <property type="project" value="UniProtKB"/>
</dbReference>
<dbReference type="GO" id="GO:0060348">
    <property type="term" value="P:bone development"/>
    <property type="evidence" value="ECO:0000250"/>
    <property type="project" value="UniProtKB"/>
</dbReference>
<dbReference type="GO" id="GO:0046849">
    <property type="term" value="P:bone remodeling"/>
    <property type="evidence" value="ECO:0000250"/>
    <property type="project" value="UniProtKB"/>
</dbReference>
<dbReference type="GO" id="GO:0010644">
    <property type="term" value="P:cell communication by electrical coupling"/>
    <property type="evidence" value="ECO:0007669"/>
    <property type="project" value="TreeGrafter"/>
</dbReference>
<dbReference type="GO" id="GO:0007267">
    <property type="term" value="P:cell-cell signaling"/>
    <property type="evidence" value="ECO:0007669"/>
    <property type="project" value="InterPro"/>
</dbReference>
<dbReference type="GO" id="GO:0007507">
    <property type="term" value="P:heart development"/>
    <property type="evidence" value="ECO:0007669"/>
    <property type="project" value="InterPro"/>
</dbReference>
<dbReference type="GO" id="GO:0099111">
    <property type="term" value="P:microtubule-based transport"/>
    <property type="evidence" value="ECO:0000250"/>
    <property type="project" value="UniProtKB"/>
</dbReference>
<dbReference type="GO" id="GO:0030308">
    <property type="term" value="P:negative regulation of cell growth"/>
    <property type="evidence" value="ECO:0000250"/>
    <property type="project" value="UniProtKB"/>
</dbReference>
<dbReference type="GO" id="GO:0042981">
    <property type="term" value="P:regulation of apoptotic process"/>
    <property type="evidence" value="ECO:0000250"/>
    <property type="project" value="UniProtKB"/>
</dbReference>
<dbReference type="GO" id="GO:0007283">
    <property type="term" value="P:spermatogenesis"/>
    <property type="evidence" value="ECO:0000250"/>
    <property type="project" value="UniProtKB"/>
</dbReference>
<dbReference type="FunFam" id="1.20.1440.80:FF:000001">
    <property type="entry name" value="Gap junction alpha-1"/>
    <property type="match status" value="1"/>
</dbReference>
<dbReference type="FunFam" id="1.20.5.1130:FF:000001">
    <property type="entry name" value="Gap junction alpha-1"/>
    <property type="match status" value="1"/>
</dbReference>
<dbReference type="Gene3D" id="1.20.5.1130">
    <property type="entry name" value="Connexin43"/>
    <property type="match status" value="1"/>
</dbReference>
<dbReference type="Gene3D" id="1.20.1440.80">
    <property type="entry name" value="Gap junction channel protein cysteine-rich domain"/>
    <property type="match status" value="1"/>
</dbReference>
<dbReference type="InterPro" id="IPR035091">
    <property type="entry name" value="Alpha_helix_dom_sf"/>
</dbReference>
<dbReference type="InterPro" id="IPR000500">
    <property type="entry name" value="Connexin"/>
</dbReference>
<dbReference type="InterPro" id="IPR002261">
    <property type="entry name" value="Connexin43"/>
</dbReference>
<dbReference type="InterPro" id="IPR013124">
    <property type="entry name" value="Connexin43_C"/>
</dbReference>
<dbReference type="InterPro" id="IPR034634">
    <property type="entry name" value="Connexin_C"/>
</dbReference>
<dbReference type="InterPro" id="IPR019570">
    <property type="entry name" value="Connexin_CCC"/>
</dbReference>
<dbReference type="InterPro" id="IPR017990">
    <property type="entry name" value="Connexin_CS"/>
</dbReference>
<dbReference type="InterPro" id="IPR013092">
    <property type="entry name" value="Connexin_N"/>
</dbReference>
<dbReference type="InterPro" id="IPR038359">
    <property type="entry name" value="Connexin_N_sf"/>
</dbReference>
<dbReference type="PANTHER" id="PTHR11984">
    <property type="entry name" value="CONNEXIN"/>
    <property type="match status" value="1"/>
</dbReference>
<dbReference type="PANTHER" id="PTHR11984:SF33">
    <property type="entry name" value="GAP JUNCTION ALPHA-1 PROTEIN"/>
    <property type="match status" value="1"/>
</dbReference>
<dbReference type="Pfam" id="PF00029">
    <property type="entry name" value="Connexin"/>
    <property type="match status" value="1"/>
</dbReference>
<dbReference type="Pfam" id="PF03508">
    <property type="entry name" value="Connexin43"/>
    <property type="match status" value="1"/>
</dbReference>
<dbReference type="PRINTS" id="PR00206">
    <property type="entry name" value="CONNEXIN"/>
</dbReference>
<dbReference type="PRINTS" id="PR01132">
    <property type="entry name" value="CONNEXINA1"/>
</dbReference>
<dbReference type="SMART" id="SM00037">
    <property type="entry name" value="CNX"/>
    <property type="match status" value="1"/>
</dbReference>
<dbReference type="SMART" id="SM01089">
    <property type="entry name" value="Connexin_CCC"/>
    <property type="match status" value="1"/>
</dbReference>
<dbReference type="SUPFAM" id="SSF118220">
    <property type="entry name" value="Connexin43"/>
    <property type="match status" value="1"/>
</dbReference>
<dbReference type="PROSITE" id="PS00407">
    <property type="entry name" value="CONNEXINS_1"/>
    <property type="match status" value="1"/>
</dbReference>
<dbReference type="PROSITE" id="PS00408">
    <property type="entry name" value="CONNEXINS_2"/>
    <property type="match status" value="1"/>
</dbReference>
<reference key="1">
    <citation type="journal article" date="2004" name="Dev. Genes Evol.">
        <title>Connexin43 orthologues in vertebrates: phylogeny from fish to man.</title>
        <authorList>
            <person name="van der Heyden M.A."/>
            <person name="van Eijk M."/>
            <person name="Wilders R."/>
            <person name="de Bakker J.M."/>
            <person name="Opthof T."/>
        </authorList>
    </citation>
    <scope>NUCLEOTIDE SEQUENCE [GENOMIC DNA]</scope>
</reference>
<reference key="2">
    <citation type="journal article" date="2005" name="J. Biol. Chem.">
        <title>Oxidative activation of protein kinase Cgamma through the C1 domain. Effects on gap junctions.</title>
        <authorList>
            <person name="Lin D."/>
            <person name="Takemoto D.J."/>
        </authorList>
    </citation>
    <scope>PHOSPHORYLATION AT SER-368</scope>
    <scope>MUTAGENESIS OF SER-368</scope>
</reference>
<sequence length="382" mass="43033">MGDWSALGKLLDKVQAYSTAGGKVWLSVLFIFRILLLGTAVESAWGDEQSAFRCNTQQPGCENVCYDKSFPISHVRFWVLQIIFVSVPTLLYLAHVFYVMRKEEKLNKKEEELKVAQTDGVNVEMHLKQIEIKKFKYGIEEHGKVKMRGGLLRTYIISILFKSVFEVAFLLIQWYIYGFSLSAVYTCKRDPCPHQVDCFLSRPTEKTIFIIFMLVVSLVSLALNIIELFYVFFKGVKDRVKGKSDPYHATTGPLSPSKDCGSPKYAYFNGCSSPTAPLSPMSPPGYKLVTGDRNNSSCRNYNKQASEQNWANYSAEQNRMGQAGSTISNSHAQPFDFPDDNQNSKKLAAGHELQPLAIVDQRPSSRASSRASSRPRPDDLEI</sequence>
<accession>Q6TYA7</accession>
<gene>
    <name type="primary">GJA1</name>
</gene>